<name>YDHY_ECOLI</name>
<accession>P0AAL6</accession>
<accession>P77186</accession>
<organism>
    <name type="scientific">Escherichia coli (strain K12)</name>
    <dbReference type="NCBI Taxonomy" id="83333"/>
    <lineage>
        <taxon>Bacteria</taxon>
        <taxon>Pseudomonadati</taxon>
        <taxon>Pseudomonadota</taxon>
        <taxon>Gammaproteobacteria</taxon>
        <taxon>Enterobacterales</taxon>
        <taxon>Enterobacteriaceae</taxon>
        <taxon>Escherichia</taxon>
    </lineage>
</organism>
<feature type="chain" id="PRO_0000159297" description="Uncharacterized ferredoxin-like protein YdhY">
    <location>
        <begin position="1"/>
        <end position="208"/>
    </location>
</feature>
<feature type="domain" description="4Fe-4S ferredoxin-type 1" evidence="2">
    <location>
        <begin position="59"/>
        <end position="88"/>
    </location>
</feature>
<feature type="domain" description="4Fe-4S ferredoxin-type 2" evidence="2">
    <location>
        <begin position="114"/>
        <end position="145"/>
    </location>
</feature>
<feature type="domain" description="4Fe-4S ferredoxin-type 3" evidence="2">
    <location>
        <begin position="147"/>
        <end position="176"/>
    </location>
</feature>
<feature type="domain" description="4Fe-4S ferredoxin-type 4" evidence="2">
    <location>
        <begin position="174"/>
        <end position="203"/>
    </location>
</feature>
<feature type="binding site" evidence="1">
    <location>
        <position position="68"/>
    </location>
    <ligand>
        <name>[4Fe-4S] cluster</name>
        <dbReference type="ChEBI" id="CHEBI:49883"/>
        <label>1</label>
    </ligand>
</feature>
<feature type="binding site" evidence="1">
    <location>
        <position position="71"/>
    </location>
    <ligand>
        <name>[4Fe-4S] cluster</name>
        <dbReference type="ChEBI" id="CHEBI:49883"/>
        <label>1</label>
    </ligand>
</feature>
<feature type="binding site" evidence="1">
    <location>
        <position position="74"/>
    </location>
    <ligand>
        <name>[4Fe-4S] cluster</name>
        <dbReference type="ChEBI" id="CHEBI:49883"/>
        <label>1</label>
    </ligand>
</feature>
<feature type="binding site" evidence="1">
    <location>
        <position position="78"/>
    </location>
    <ligand>
        <name>[4Fe-4S] cluster</name>
        <dbReference type="ChEBI" id="CHEBI:49883"/>
        <label>2</label>
    </ligand>
</feature>
<feature type="binding site" evidence="1">
    <location>
        <position position="123"/>
    </location>
    <ligand>
        <name>[4Fe-4S] cluster</name>
        <dbReference type="ChEBI" id="CHEBI:49883"/>
        <label>3</label>
    </ligand>
</feature>
<feature type="binding site" evidence="1">
    <location>
        <position position="126"/>
    </location>
    <ligand>
        <name>[4Fe-4S] cluster</name>
        <dbReference type="ChEBI" id="CHEBI:49883"/>
        <label>3</label>
    </ligand>
</feature>
<feature type="binding site" evidence="1">
    <location>
        <position position="131"/>
    </location>
    <ligand>
        <name>[4Fe-4S] cluster</name>
        <dbReference type="ChEBI" id="CHEBI:49883"/>
        <label>3</label>
    </ligand>
</feature>
<feature type="binding site" evidence="1">
    <location>
        <position position="135"/>
    </location>
    <ligand>
        <name>[4Fe-4S] cluster</name>
        <dbReference type="ChEBI" id="CHEBI:49883"/>
        <label>4</label>
    </ligand>
</feature>
<feature type="binding site" evidence="1">
    <location>
        <position position="156"/>
    </location>
    <ligand>
        <name>[4Fe-4S] cluster</name>
        <dbReference type="ChEBI" id="CHEBI:49883"/>
        <label>4</label>
    </ligand>
</feature>
<feature type="binding site" evidence="1">
    <location>
        <position position="159"/>
    </location>
    <ligand>
        <name>[4Fe-4S] cluster</name>
        <dbReference type="ChEBI" id="CHEBI:49883"/>
        <label>4</label>
    </ligand>
</feature>
<feature type="binding site" evidence="1">
    <location>
        <position position="162"/>
    </location>
    <ligand>
        <name>[4Fe-4S] cluster</name>
        <dbReference type="ChEBI" id="CHEBI:49883"/>
        <label>4</label>
    </ligand>
</feature>
<feature type="binding site" evidence="1">
    <location>
        <position position="166"/>
    </location>
    <ligand>
        <name>[4Fe-4S] cluster</name>
        <dbReference type="ChEBI" id="CHEBI:49883"/>
        <label>3</label>
    </ligand>
</feature>
<feature type="binding site" evidence="1">
    <location>
        <position position="183"/>
    </location>
    <ligand>
        <name>[4Fe-4S] cluster</name>
        <dbReference type="ChEBI" id="CHEBI:49883"/>
        <label>2</label>
    </ligand>
</feature>
<feature type="binding site" evidence="1">
    <location>
        <position position="186"/>
    </location>
    <ligand>
        <name>[4Fe-4S] cluster</name>
        <dbReference type="ChEBI" id="CHEBI:49883"/>
        <label>2</label>
    </ligand>
</feature>
<feature type="binding site" evidence="1">
    <location>
        <position position="189"/>
    </location>
    <ligand>
        <name>[4Fe-4S] cluster</name>
        <dbReference type="ChEBI" id="CHEBI:49883"/>
        <label>2</label>
    </ligand>
</feature>
<feature type="binding site" evidence="1">
    <location>
        <position position="193"/>
    </location>
    <ligand>
        <name>[4Fe-4S] cluster</name>
        <dbReference type="ChEBI" id="CHEBI:49883"/>
        <label>1</label>
    </ligand>
</feature>
<comment type="induction">
    <text evidence="3">Up-regulated by the oxygen-responsive transcription factor FNR under anaerobic conditions. Repressed in the presence of nitrate or nitrite via the two-component systems NarXL and NarPQ, respectively.</text>
</comment>
<sequence length="208" mass="22367">MNPVDRPLLDIGLTRLEFLRISGKGLAGLTIAPALLSLLGCKQEDIDSGTVGLINTPKGVLVTQRARCTGCHRCEISCTNFNDGSVGTFFSRIKIHRNYFFGDNGVGSGGGLYGDLNYTADTCRQCKEPQCMNVCPIGAITWQQKEGCITVDHKRCIGCSACTTACPWMMATVNTESKKSSKCVLCGECANACPTGALKIIEWKDITV</sequence>
<keyword id="KW-0004">4Fe-4S</keyword>
<keyword id="KW-0408">Iron</keyword>
<keyword id="KW-0411">Iron-sulfur</keyword>
<keyword id="KW-0479">Metal-binding</keyword>
<keyword id="KW-1185">Reference proteome</keyword>
<keyword id="KW-0677">Repeat</keyword>
<gene>
    <name type="primary">ydhY</name>
    <name type="ordered locus">b1674</name>
    <name type="ordered locus">JW1664</name>
</gene>
<protein>
    <recommendedName>
        <fullName>Uncharacterized ferredoxin-like protein YdhY</fullName>
    </recommendedName>
</protein>
<evidence type="ECO:0000250" key="1"/>
<evidence type="ECO:0000255" key="2">
    <source>
        <dbReference type="PROSITE-ProRule" id="PRU00711"/>
    </source>
</evidence>
<evidence type="ECO:0000269" key="3">
    <source>
    </source>
</evidence>
<proteinExistence type="evidence at transcript level"/>
<reference key="1">
    <citation type="journal article" date="1996" name="DNA Res.">
        <title>A 570-kb DNA sequence of the Escherichia coli K-12 genome corresponding to the 28.0-40.1 min region on the linkage map.</title>
        <authorList>
            <person name="Aiba H."/>
            <person name="Baba T."/>
            <person name="Fujita K."/>
            <person name="Hayashi K."/>
            <person name="Inada T."/>
            <person name="Isono K."/>
            <person name="Itoh T."/>
            <person name="Kasai H."/>
            <person name="Kashimoto K."/>
            <person name="Kimura S."/>
            <person name="Kitakawa M."/>
            <person name="Kitagawa M."/>
            <person name="Makino K."/>
            <person name="Miki T."/>
            <person name="Mizobuchi K."/>
            <person name="Mori H."/>
            <person name="Mori T."/>
            <person name="Motomura K."/>
            <person name="Nakade S."/>
            <person name="Nakamura Y."/>
            <person name="Nashimoto H."/>
            <person name="Nishio Y."/>
            <person name="Oshima T."/>
            <person name="Saito N."/>
            <person name="Sampei G."/>
            <person name="Seki Y."/>
            <person name="Sivasundaram S."/>
            <person name="Tagami H."/>
            <person name="Takeda J."/>
            <person name="Takemoto K."/>
            <person name="Takeuchi Y."/>
            <person name="Wada C."/>
            <person name="Yamamoto Y."/>
            <person name="Horiuchi T."/>
        </authorList>
    </citation>
    <scope>NUCLEOTIDE SEQUENCE [LARGE SCALE GENOMIC DNA]</scope>
    <source>
        <strain>K12 / W3110 / ATCC 27325 / DSM 5911</strain>
    </source>
</reference>
<reference key="2">
    <citation type="journal article" date="1997" name="J. Bacteriol.">
        <title>Analysis of the boundaries of Salmonella pathogenicity island 2 and the corresponding chromosomal region of Escherichia coli K-12.</title>
        <authorList>
            <person name="Hensel M."/>
            <person name="Shea J.E."/>
            <person name="Baeumler A.J."/>
            <person name="Gleeson C."/>
            <person name="Blattner F.R."/>
            <person name="Holden D.W."/>
        </authorList>
    </citation>
    <scope>NUCLEOTIDE SEQUENCE [GENOMIC DNA]</scope>
    <source>
        <strain>K12 / MG1655 / ATCC 47076</strain>
    </source>
</reference>
<reference key="3">
    <citation type="journal article" date="1997" name="Science">
        <title>The complete genome sequence of Escherichia coli K-12.</title>
        <authorList>
            <person name="Blattner F.R."/>
            <person name="Plunkett G. III"/>
            <person name="Bloch C.A."/>
            <person name="Perna N.T."/>
            <person name="Burland V."/>
            <person name="Riley M."/>
            <person name="Collado-Vides J."/>
            <person name="Glasner J.D."/>
            <person name="Rode C.K."/>
            <person name="Mayhew G.F."/>
            <person name="Gregor J."/>
            <person name="Davis N.W."/>
            <person name="Kirkpatrick H.A."/>
            <person name="Goeden M.A."/>
            <person name="Rose D.J."/>
            <person name="Mau B."/>
            <person name="Shao Y."/>
        </authorList>
    </citation>
    <scope>NUCLEOTIDE SEQUENCE [LARGE SCALE GENOMIC DNA]</scope>
    <source>
        <strain>K12 / MG1655 / ATCC 47076</strain>
    </source>
</reference>
<reference key="4">
    <citation type="journal article" date="2006" name="Mol. Syst. Biol.">
        <title>Highly accurate genome sequences of Escherichia coli K-12 strains MG1655 and W3110.</title>
        <authorList>
            <person name="Hayashi K."/>
            <person name="Morooka N."/>
            <person name="Yamamoto Y."/>
            <person name="Fujita K."/>
            <person name="Isono K."/>
            <person name="Choi S."/>
            <person name="Ohtsubo E."/>
            <person name="Baba T."/>
            <person name="Wanner B.L."/>
            <person name="Mori H."/>
            <person name="Horiuchi T."/>
        </authorList>
    </citation>
    <scope>NUCLEOTIDE SEQUENCE [LARGE SCALE GENOMIC DNA]</scope>
    <source>
        <strain>K12 / W3110 / ATCC 27325 / DSM 5911</strain>
    </source>
</reference>
<reference key="5">
    <citation type="journal article" date="2008" name="Microbiology">
        <title>Characterization of the Escherichia coli K-12 ydhYVWXUT operon: regulation by FNR, NarL and NarP.</title>
        <authorList>
            <person name="Partridge J.D."/>
            <person name="Browning D.F."/>
            <person name="Xu M."/>
            <person name="Newnham L.J."/>
            <person name="Scott C."/>
            <person name="Roberts R.E."/>
            <person name="Poole R.K."/>
            <person name="Green J."/>
        </authorList>
    </citation>
    <scope>INDUCTION</scope>
    <source>
        <strain>K12</strain>
    </source>
</reference>
<dbReference type="EMBL" id="U68703">
    <property type="protein sequence ID" value="AAB47950.1"/>
    <property type="molecule type" value="Genomic_DNA"/>
</dbReference>
<dbReference type="EMBL" id="U00096">
    <property type="protein sequence ID" value="AAC74744.1"/>
    <property type="molecule type" value="Genomic_DNA"/>
</dbReference>
<dbReference type="EMBL" id="AP009048">
    <property type="protein sequence ID" value="BAA15444.1"/>
    <property type="molecule type" value="Genomic_DNA"/>
</dbReference>
<dbReference type="PIR" id="B64925">
    <property type="entry name" value="B64925"/>
</dbReference>
<dbReference type="RefSeq" id="NP_416189.1">
    <property type="nucleotide sequence ID" value="NC_000913.3"/>
</dbReference>
<dbReference type="RefSeq" id="WP_001070230.1">
    <property type="nucleotide sequence ID" value="NZ_STEB01000003.1"/>
</dbReference>
<dbReference type="BioGRID" id="4259669">
    <property type="interactions" value="21"/>
</dbReference>
<dbReference type="BioGRID" id="853038">
    <property type="interactions" value="1"/>
</dbReference>
<dbReference type="FunCoup" id="P0AAL6">
    <property type="interactions" value="78"/>
</dbReference>
<dbReference type="IntAct" id="P0AAL6">
    <property type="interactions" value="5"/>
</dbReference>
<dbReference type="STRING" id="511145.b1674"/>
<dbReference type="PaxDb" id="511145-b1674"/>
<dbReference type="EnsemblBacteria" id="AAC74744">
    <property type="protein sequence ID" value="AAC74744"/>
    <property type="gene ID" value="b1674"/>
</dbReference>
<dbReference type="GeneID" id="948749"/>
<dbReference type="KEGG" id="ecj:JW1664"/>
<dbReference type="KEGG" id="eco:b1674"/>
<dbReference type="KEGG" id="ecoc:C3026_09595"/>
<dbReference type="PATRIC" id="fig|1411691.4.peg.585"/>
<dbReference type="EchoBASE" id="EB3717"/>
<dbReference type="eggNOG" id="COG0437">
    <property type="taxonomic scope" value="Bacteria"/>
</dbReference>
<dbReference type="HOGENOM" id="CLU_043374_3_2_6"/>
<dbReference type="InParanoid" id="P0AAL6"/>
<dbReference type="OMA" id="WYGTADF"/>
<dbReference type="OrthoDB" id="9779457at2"/>
<dbReference type="PhylomeDB" id="P0AAL6"/>
<dbReference type="BioCyc" id="EcoCyc:G6902-MONOMER"/>
<dbReference type="PRO" id="PR:P0AAL6"/>
<dbReference type="Proteomes" id="UP000000625">
    <property type="component" value="Chromosome"/>
</dbReference>
<dbReference type="GO" id="GO:0051539">
    <property type="term" value="F:4 iron, 4 sulfur cluster binding"/>
    <property type="evidence" value="ECO:0007669"/>
    <property type="project" value="UniProtKB-KW"/>
</dbReference>
<dbReference type="GO" id="GO:0046872">
    <property type="term" value="F:metal ion binding"/>
    <property type="evidence" value="ECO:0007669"/>
    <property type="project" value="UniProtKB-KW"/>
</dbReference>
<dbReference type="CDD" id="cd10550">
    <property type="entry name" value="DMSOR_beta_like"/>
    <property type="match status" value="1"/>
</dbReference>
<dbReference type="Gene3D" id="3.30.70.20">
    <property type="match status" value="2"/>
</dbReference>
<dbReference type="InterPro" id="IPR017896">
    <property type="entry name" value="4Fe4S_Fe-S-bd"/>
</dbReference>
<dbReference type="InterPro" id="IPR017900">
    <property type="entry name" value="4Fe4S_Fe_S_CS"/>
</dbReference>
<dbReference type="InterPro" id="IPR050294">
    <property type="entry name" value="RnfB_subfamily"/>
</dbReference>
<dbReference type="NCBIfam" id="NF007382">
    <property type="entry name" value="PRK09898.1"/>
    <property type="match status" value="1"/>
</dbReference>
<dbReference type="PANTHER" id="PTHR42859:SF17">
    <property type="entry name" value="ELECTRON TRANSPORT PROTEIN HYDN-RELATED"/>
    <property type="match status" value="1"/>
</dbReference>
<dbReference type="PANTHER" id="PTHR42859">
    <property type="entry name" value="OXIDOREDUCTASE"/>
    <property type="match status" value="1"/>
</dbReference>
<dbReference type="Pfam" id="PF13247">
    <property type="entry name" value="Fer4_11"/>
    <property type="match status" value="1"/>
</dbReference>
<dbReference type="Pfam" id="PF12800">
    <property type="entry name" value="Fer4_4"/>
    <property type="match status" value="1"/>
</dbReference>
<dbReference type="SUPFAM" id="SSF54862">
    <property type="entry name" value="4Fe-4S ferredoxins"/>
    <property type="match status" value="1"/>
</dbReference>
<dbReference type="PROSITE" id="PS00198">
    <property type="entry name" value="4FE4S_FER_1"/>
    <property type="match status" value="2"/>
</dbReference>
<dbReference type="PROSITE" id="PS51379">
    <property type="entry name" value="4FE4S_FER_2"/>
    <property type="match status" value="4"/>
</dbReference>